<proteinExistence type="inferred from homology"/>
<gene>
    <name evidence="1" type="primary">asnS</name>
    <name type="ordered locus">EcE24377A_1030</name>
</gene>
<keyword id="KW-0030">Aminoacyl-tRNA synthetase</keyword>
<keyword id="KW-0067">ATP-binding</keyword>
<keyword id="KW-0963">Cytoplasm</keyword>
<keyword id="KW-0436">Ligase</keyword>
<keyword id="KW-0547">Nucleotide-binding</keyword>
<keyword id="KW-0648">Protein biosynthesis</keyword>
<keyword id="KW-1185">Reference proteome</keyword>
<reference key="1">
    <citation type="journal article" date="2008" name="J. Bacteriol.">
        <title>The pangenome structure of Escherichia coli: comparative genomic analysis of E. coli commensal and pathogenic isolates.</title>
        <authorList>
            <person name="Rasko D.A."/>
            <person name="Rosovitz M.J."/>
            <person name="Myers G.S.A."/>
            <person name="Mongodin E.F."/>
            <person name="Fricke W.F."/>
            <person name="Gajer P."/>
            <person name="Crabtree J."/>
            <person name="Sebaihia M."/>
            <person name="Thomson N.R."/>
            <person name="Chaudhuri R."/>
            <person name="Henderson I.R."/>
            <person name="Sperandio V."/>
            <person name="Ravel J."/>
        </authorList>
    </citation>
    <scope>NUCLEOTIDE SEQUENCE [LARGE SCALE GENOMIC DNA]</scope>
    <source>
        <strain>E24377A / ETEC</strain>
    </source>
</reference>
<evidence type="ECO:0000255" key="1">
    <source>
        <dbReference type="HAMAP-Rule" id="MF_00534"/>
    </source>
</evidence>
<comment type="catalytic activity">
    <reaction evidence="1">
        <text>tRNA(Asn) + L-asparagine + ATP = L-asparaginyl-tRNA(Asn) + AMP + diphosphate + H(+)</text>
        <dbReference type="Rhea" id="RHEA:11180"/>
        <dbReference type="Rhea" id="RHEA-COMP:9659"/>
        <dbReference type="Rhea" id="RHEA-COMP:9674"/>
        <dbReference type="ChEBI" id="CHEBI:15378"/>
        <dbReference type="ChEBI" id="CHEBI:30616"/>
        <dbReference type="ChEBI" id="CHEBI:33019"/>
        <dbReference type="ChEBI" id="CHEBI:58048"/>
        <dbReference type="ChEBI" id="CHEBI:78442"/>
        <dbReference type="ChEBI" id="CHEBI:78515"/>
        <dbReference type="ChEBI" id="CHEBI:456215"/>
        <dbReference type="EC" id="6.1.1.22"/>
    </reaction>
</comment>
<comment type="subunit">
    <text evidence="1">Homodimer.</text>
</comment>
<comment type="subcellular location">
    <subcellularLocation>
        <location evidence="1">Cytoplasm</location>
    </subcellularLocation>
</comment>
<comment type="similarity">
    <text evidence="1">Belongs to the class-II aminoacyl-tRNA synthetase family.</text>
</comment>
<dbReference type="EC" id="6.1.1.22" evidence="1"/>
<dbReference type="EMBL" id="CP000800">
    <property type="protein sequence ID" value="ABV18888.1"/>
    <property type="molecule type" value="Genomic_DNA"/>
</dbReference>
<dbReference type="RefSeq" id="WP_000117881.1">
    <property type="nucleotide sequence ID" value="NC_009801.1"/>
</dbReference>
<dbReference type="SMR" id="A7ZK21"/>
<dbReference type="GeneID" id="93776484"/>
<dbReference type="KEGG" id="ecw:EcE24377A_1030"/>
<dbReference type="HOGENOM" id="CLU_004553_2_0_6"/>
<dbReference type="Proteomes" id="UP000001122">
    <property type="component" value="Chromosome"/>
</dbReference>
<dbReference type="GO" id="GO:0005737">
    <property type="term" value="C:cytoplasm"/>
    <property type="evidence" value="ECO:0007669"/>
    <property type="project" value="UniProtKB-SubCell"/>
</dbReference>
<dbReference type="GO" id="GO:0004816">
    <property type="term" value="F:asparagine-tRNA ligase activity"/>
    <property type="evidence" value="ECO:0007669"/>
    <property type="project" value="UniProtKB-UniRule"/>
</dbReference>
<dbReference type="GO" id="GO:0005524">
    <property type="term" value="F:ATP binding"/>
    <property type="evidence" value="ECO:0007669"/>
    <property type="project" value="UniProtKB-UniRule"/>
</dbReference>
<dbReference type="GO" id="GO:0003676">
    <property type="term" value="F:nucleic acid binding"/>
    <property type="evidence" value="ECO:0007669"/>
    <property type="project" value="InterPro"/>
</dbReference>
<dbReference type="GO" id="GO:0006421">
    <property type="term" value="P:asparaginyl-tRNA aminoacylation"/>
    <property type="evidence" value="ECO:0007669"/>
    <property type="project" value="UniProtKB-UniRule"/>
</dbReference>
<dbReference type="CDD" id="cd00776">
    <property type="entry name" value="AsxRS_core"/>
    <property type="match status" value="1"/>
</dbReference>
<dbReference type="CDD" id="cd04318">
    <property type="entry name" value="EcAsnRS_like_N"/>
    <property type="match status" value="1"/>
</dbReference>
<dbReference type="FunFam" id="2.40.50.140:FF:000116">
    <property type="entry name" value="Asparagine--tRNA ligase"/>
    <property type="match status" value="1"/>
</dbReference>
<dbReference type="FunFam" id="3.30.930.10:FF:000016">
    <property type="entry name" value="Asparagine--tRNA ligase"/>
    <property type="match status" value="1"/>
</dbReference>
<dbReference type="Gene3D" id="3.30.930.10">
    <property type="entry name" value="Bira Bifunctional Protein, Domain 2"/>
    <property type="match status" value="1"/>
</dbReference>
<dbReference type="Gene3D" id="2.40.50.140">
    <property type="entry name" value="Nucleic acid-binding proteins"/>
    <property type="match status" value="1"/>
</dbReference>
<dbReference type="HAMAP" id="MF_00534">
    <property type="entry name" value="Asn_tRNA_synth"/>
    <property type="match status" value="1"/>
</dbReference>
<dbReference type="InterPro" id="IPR004364">
    <property type="entry name" value="Aa-tRNA-synt_II"/>
</dbReference>
<dbReference type="InterPro" id="IPR006195">
    <property type="entry name" value="aa-tRNA-synth_II"/>
</dbReference>
<dbReference type="InterPro" id="IPR045864">
    <property type="entry name" value="aa-tRNA-synth_II/BPL/LPL"/>
</dbReference>
<dbReference type="InterPro" id="IPR004522">
    <property type="entry name" value="Asn-tRNA-ligase"/>
</dbReference>
<dbReference type="InterPro" id="IPR002312">
    <property type="entry name" value="Asp/Asn-tRNA-synth_IIb"/>
</dbReference>
<dbReference type="InterPro" id="IPR012340">
    <property type="entry name" value="NA-bd_OB-fold"/>
</dbReference>
<dbReference type="InterPro" id="IPR004365">
    <property type="entry name" value="NA-bd_OB_tRNA"/>
</dbReference>
<dbReference type="NCBIfam" id="TIGR00457">
    <property type="entry name" value="asnS"/>
    <property type="match status" value="1"/>
</dbReference>
<dbReference type="NCBIfam" id="NF003037">
    <property type="entry name" value="PRK03932.1"/>
    <property type="match status" value="1"/>
</dbReference>
<dbReference type="PANTHER" id="PTHR22594:SF34">
    <property type="entry name" value="ASPARAGINE--TRNA LIGASE, MITOCHONDRIAL-RELATED"/>
    <property type="match status" value="1"/>
</dbReference>
<dbReference type="PANTHER" id="PTHR22594">
    <property type="entry name" value="ASPARTYL/LYSYL-TRNA SYNTHETASE"/>
    <property type="match status" value="1"/>
</dbReference>
<dbReference type="Pfam" id="PF00152">
    <property type="entry name" value="tRNA-synt_2"/>
    <property type="match status" value="1"/>
</dbReference>
<dbReference type="Pfam" id="PF01336">
    <property type="entry name" value="tRNA_anti-codon"/>
    <property type="match status" value="1"/>
</dbReference>
<dbReference type="PRINTS" id="PR01042">
    <property type="entry name" value="TRNASYNTHASP"/>
</dbReference>
<dbReference type="SUPFAM" id="SSF55681">
    <property type="entry name" value="Class II aaRS and biotin synthetases"/>
    <property type="match status" value="1"/>
</dbReference>
<dbReference type="SUPFAM" id="SSF50249">
    <property type="entry name" value="Nucleic acid-binding proteins"/>
    <property type="match status" value="1"/>
</dbReference>
<dbReference type="PROSITE" id="PS50862">
    <property type="entry name" value="AA_TRNA_LIGASE_II"/>
    <property type="match status" value="1"/>
</dbReference>
<protein>
    <recommendedName>
        <fullName evidence="1">Asparagine--tRNA ligase</fullName>
        <ecNumber evidence="1">6.1.1.22</ecNumber>
    </recommendedName>
    <alternativeName>
        <fullName evidence="1">Asparaginyl-tRNA synthetase</fullName>
        <shortName evidence="1">AsnRS</shortName>
    </alternativeName>
</protein>
<organism>
    <name type="scientific">Escherichia coli O139:H28 (strain E24377A / ETEC)</name>
    <dbReference type="NCBI Taxonomy" id="331111"/>
    <lineage>
        <taxon>Bacteria</taxon>
        <taxon>Pseudomonadati</taxon>
        <taxon>Pseudomonadota</taxon>
        <taxon>Gammaproteobacteria</taxon>
        <taxon>Enterobacterales</taxon>
        <taxon>Enterobacteriaceae</taxon>
        <taxon>Escherichia</taxon>
    </lineage>
</organism>
<accession>A7ZK21</accession>
<name>SYN_ECO24</name>
<feature type="chain" id="PRO_1000061018" description="Asparagine--tRNA ligase">
    <location>
        <begin position="1"/>
        <end position="466"/>
    </location>
</feature>
<sequence length="466" mass="52570">MSVVPVADVLQGRVAVDSEVTVRGWVRTRRDSKAGISFLAVYDGSCFDPVQAVINNSLPNYNEDVLRLTTGCSVIVTGKVVASPGQGQQFEIQASKVEVAGWVEDPDTYPMAAKRHSIEYLREVAHLRPRTNLIGAVARVRHTLAQALHRFFNEQGFFWVSTPLITASDTEGAGEMFRVSTLDLENLPRNDQGKVDFDKDFFGKESFLTVSGQLNGETYACALSKIYTFGPTFRAENSNTSRHLAEFWMLEPEVAFANLNDIAGLAEAMLKYVFKAVLEERADDMKFFAERVDKDAVSRLERFIEADFAQVDYTDAVTILENCGRKFENPVYWGVDLSSEHERYLAEEHFKAPVVVKNYPKDIKAFYMRLNEDGKTVAAMDVLAPGIGEIIGGSQREERLDVLDERMLEMGLNKEDYWWYRDLRRYGTVPHSGFGLGFERLIAYVTGVQNVRDVIPFPRTPRNASF</sequence>